<reference key="1">
    <citation type="journal article" date="2005" name="Nucleic Acids Res.">
        <title>Genomic blueprint of Hahella chejuensis, a marine microbe producing an algicidal agent.</title>
        <authorList>
            <person name="Jeong H."/>
            <person name="Yim J.H."/>
            <person name="Lee C."/>
            <person name="Choi S.-H."/>
            <person name="Park Y.K."/>
            <person name="Yoon S.H."/>
            <person name="Hur C.-G."/>
            <person name="Kang H.-Y."/>
            <person name="Kim D."/>
            <person name="Lee H.H."/>
            <person name="Park K.H."/>
            <person name="Park S.-H."/>
            <person name="Park H.-S."/>
            <person name="Lee H.K."/>
            <person name="Oh T.K."/>
            <person name="Kim J.F."/>
        </authorList>
    </citation>
    <scope>NUCLEOTIDE SEQUENCE [LARGE SCALE GENOMIC DNA]</scope>
    <source>
        <strain>KCTC 2396</strain>
    </source>
</reference>
<protein>
    <recommendedName>
        <fullName evidence="1">Sulfate adenylyltransferase subunit 2</fullName>
        <ecNumber evidence="1">2.7.7.4</ecNumber>
    </recommendedName>
    <alternativeName>
        <fullName evidence="1">ATP-sulfurylase small subunit</fullName>
    </alternativeName>
    <alternativeName>
        <fullName evidence="1">Sulfate adenylate transferase</fullName>
        <shortName evidence="1">SAT</shortName>
    </alternativeName>
</protein>
<accession>Q2SBG0</accession>
<evidence type="ECO:0000255" key="1">
    <source>
        <dbReference type="HAMAP-Rule" id="MF_00064"/>
    </source>
</evidence>
<evidence type="ECO:0000256" key="2">
    <source>
        <dbReference type="SAM" id="MobiDB-lite"/>
    </source>
</evidence>
<keyword id="KW-0067">ATP-binding</keyword>
<keyword id="KW-0547">Nucleotide-binding</keyword>
<keyword id="KW-0548">Nucleotidyltransferase</keyword>
<keyword id="KW-1185">Reference proteome</keyword>
<keyword id="KW-0808">Transferase</keyword>
<feature type="chain" id="PRO_0000340196" description="Sulfate adenylyltransferase subunit 2">
    <location>
        <begin position="1"/>
        <end position="302"/>
    </location>
</feature>
<feature type="region of interest" description="Disordered" evidence="2">
    <location>
        <begin position="280"/>
        <end position="302"/>
    </location>
</feature>
<name>CYSD_HAHCH</name>
<dbReference type="EC" id="2.7.7.4" evidence="1"/>
<dbReference type="EMBL" id="CP000155">
    <property type="protein sequence ID" value="ABC32014.1"/>
    <property type="molecule type" value="Genomic_DNA"/>
</dbReference>
<dbReference type="RefSeq" id="WP_011399078.1">
    <property type="nucleotide sequence ID" value="NC_007645.1"/>
</dbReference>
<dbReference type="SMR" id="Q2SBG0"/>
<dbReference type="STRING" id="349521.HCH_05342"/>
<dbReference type="KEGG" id="hch:HCH_05342"/>
<dbReference type="eggNOG" id="COG0175">
    <property type="taxonomic scope" value="Bacteria"/>
</dbReference>
<dbReference type="HOGENOM" id="CLU_043026_0_0_6"/>
<dbReference type="OrthoDB" id="9772604at2"/>
<dbReference type="UniPathway" id="UPA00140">
    <property type="reaction ID" value="UER00204"/>
</dbReference>
<dbReference type="Proteomes" id="UP000000238">
    <property type="component" value="Chromosome"/>
</dbReference>
<dbReference type="GO" id="GO:0005524">
    <property type="term" value="F:ATP binding"/>
    <property type="evidence" value="ECO:0007669"/>
    <property type="project" value="UniProtKB-KW"/>
</dbReference>
<dbReference type="GO" id="GO:0004781">
    <property type="term" value="F:sulfate adenylyltransferase (ATP) activity"/>
    <property type="evidence" value="ECO:0007669"/>
    <property type="project" value="UniProtKB-UniRule"/>
</dbReference>
<dbReference type="GO" id="GO:0070814">
    <property type="term" value="P:hydrogen sulfide biosynthetic process"/>
    <property type="evidence" value="ECO:0007669"/>
    <property type="project" value="UniProtKB-UniRule"/>
</dbReference>
<dbReference type="GO" id="GO:0000103">
    <property type="term" value="P:sulfate assimilation"/>
    <property type="evidence" value="ECO:0007669"/>
    <property type="project" value="UniProtKB-UniRule"/>
</dbReference>
<dbReference type="CDD" id="cd23946">
    <property type="entry name" value="Sulfate_adenylyltransferase_2"/>
    <property type="match status" value="1"/>
</dbReference>
<dbReference type="FunFam" id="3.40.50.620:FF:000002">
    <property type="entry name" value="Sulfate adenylyltransferase subunit 2"/>
    <property type="match status" value="1"/>
</dbReference>
<dbReference type="Gene3D" id="3.40.50.620">
    <property type="entry name" value="HUPs"/>
    <property type="match status" value="1"/>
</dbReference>
<dbReference type="HAMAP" id="MF_00064">
    <property type="entry name" value="Sulf_adenylyltr_sub2"/>
    <property type="match status" value="1"/>
</dbReference>
<dbReference type="InterPro" id="IPR002500">
    <property type="entry name" value="PAPS_reduct_dom"/>
</dbReference>
<dbReference type="InterPro" id="IPR014729">
    <property type="entry name" value="Rossmann-like_a/b/a_fold"/>
</dbReference>
<dbReference type="InterPro" id="IPR011784">
    <property type="entry name" value="SO4_adenylTrfase_ssu"/>
</dbReference>
<dbReference type="InterPro" id="IPR050128">
    <property type="entry name" value="Sulfate_adenylyltrnsfr_sub2"/>
</dbReference>
<dbReference type="NCBIfam" id="TIGR02039">
    <property type="entry name" value="CysD"/>
    <property type="match status" value="1"/>
</dbReference>
<dbReference type="NCBIfam" id="NF003587">
    <property type="entry name" value="PRK05253.1"/>
    <property type="match status" value="1"/>
</dbReference>
<dbReference type="NCBIfam" id="NF009214">
    <property type="entry name" value="PRK12563.1"/>
    <property type="match status" value="1"/>
</dbReference>
<dbReference type="PANTHER" id="PTHR43196">
    <property type="entry name" value="SULFATE ADENYLYLTRANSFERASE SUBUNIT 2"/>
    <property type="match status" value="1"/>
</dbReference>
<dbReference type="PANTHER" id="PTHR43196:SF1">
    <property type="entry name" value="SULFATE ADENYLYLTRANSFERASE SUBUNIT 2"/>
    <property type="match status" value="1"/>
</dbReference>
<dbReference type="Pfam" id="PF01507">
    <property type="entry name" value="PAPS_reduct"/>
    <property type="match status" value="1"/>
</dbReference>
<dbReference type="PIRSF" id="PIRSF002936">
    <property type="entry name" value="CysDAde_trans"/>
    <property type="match status" value="1"/>
</dbReference>
<dbReference type="SUPFAM" id="SSF52402">
    <property type="entry name" value="Adenine nucleotide alpha hydrolases-like"/>
    <property type="match status" value="1"/>
</dbReference>
<gene>
    <name evidence="1" type="primary">cysD</name>
    <name type="ordered locus">HCH_05342</name>
</gene>
<organism>
    <name type="scientific">Hahella chejuensis (strain KCTC 2396)</name>
    <dbReference type="NCBI Taxonomy" id="349521"/>
    <lineage>
        <taxon>Bacteria</taxon>
        <taxon>Pseudomonadati</taxon>
        <taxon>Pseudomonadota</taxon>
        <taxon>Gammaproteobacteria</taxon>
        <taxon>Oceanospirillales</taxon>
        <taxon>Hahellaceae</taxon>
        <taxon>Hahella</taxon>
    </lineage>
</organism>
<proteinExistence type="inferred from homology"/>
<sequence length="302" mass="34995">MTDYNLTHLKQLEAESIHIIREVAAEFERPVMLYSIGKDSSVMLHLARKAFFPGKPPFPLMHVDTTWKFQDMITFRDQQAAKFGLDLIVHINEDGVRQGIGPFTHGSAKHTDVMKTESLKQALNKYKFDAAFGGARRDEEKSRAKERVYSFRDSNHRWDPKNQRPELWNLYNGKINKGESIRVFPLSNWTELDIWQYIYLENIELVPLYFSAKRPVVERDGTMIMVDDDRMPLKPGETPMMKDVRFRTLGCYPLTGAIESTATTLPEIIQEMLLTTSSERQGRVIDHDQAGSMEQKKREGYF</sequence>
<comment type="function">
    <text evidence="1">With CysN forms the ATP sulfurylase (ATPS) that catalyzes the adenylation of sulfate producing adenosine 5'-phosphosulfate (APS) and diphosphate, the first enzymatic step in sulfur assimilation pathway. APS synthesis involves the formation of a high-energy phosphoric-sulfuric acid anhydride bond driven by GTP hydrolysis by CysN coupled to ATP hydrolysis by CysD.</text>
</comment>
<comment type="catalytic activity">
    <reaction evidence="1">
        <text>sulfate + ATP + H(+) = adenosine 5'-phosphosulfate + diphosphate</text>
        <dbReference type="Rhea" id="RHEA:18133"/>
        <dbReference type="ChEBI" id="CHEBI:15378"/>
        <dbReference type="ChEBI" id="CHEBI:16189"/>
        <dbReference type="ChEBI" id="CHEBI:30616"/>
        <dbReference type="ChEBI" id="CHEBI:33019"/>
        <dbReference type="ChEBI" id="CHEBI:58243"/>
        <dbReference type="EC" id="2.7.7.4"/>
    </reaction>
</comment>
<comment type="pathway">
    <text evidence="1">Sulfur metabolism; hydrogen sulfide biosynthesis; sulfite from sulfate: step 1/3.</text>
</comment>
<comment type="subunit">
    <text evidence="1">Heterodimer composed of CysD, the smaller subunit, and CysN.</text>
</comment>
<comment type="similarity">
    <text evidence="1">Belongs to the PAPS reductase family. CysD subfamily.</text>
</comment>